<accession>B8ZM12</accession>
<organism>
    <name type="scientific">Streptococcus pneumoniae (strain ATCC 700669 / Spain 23F-1)</name>
    <dbReference type="NCBI Taxonomy" id="561276"/>
    <lineage>
        <taxon>Bacteria</taxon>
        <taxon>Bacillati</taxon>
        <taxon>Bacillota</taxon>
        <taxon>Bacilli</taxon>
        <taxon>Lactobacillales</taxon>
        <taxon>Streptococcaceae</taxon>
        <taxon>Streptococcus</taxon>
    </lineage>
</organism>
<evidence type="ECO:0000255" key="1">
    <source>
        <dbReference type="HAMAP-Rule" id="MF_00171"/>
    </source>
</evidence>
<feature type="chain" id="PRO_1000194572" description="tRNA pseudouridine synthase A">
    <location>
        <begin position="1"/>
        <end position="249"/>
    </location>
</feature>
<feature type="active site" description="Nucleophile" evidence="1">
    <location>
        <position position="53"/>
    </location>
</feature>
<feature type="binding site" evidence="1">
    <location>
        <position position="111"/>
    </location>
    <ligand>
        <name>substrate</name>
    </ligand>
</feature>
<keyword id="KW-0413">Isomerase</keyword>
<keyword id="KW-0819">tRNA processing</keyword>
<gene>
    <name evidence="1" type="primary">truA</name>
    <name type="ordered locus">SPN23F16120</name>
</gene>
<comment type="function">
    <text evidence="1">Formation of pseudouridine at positions 38, 39 and 40 in the anticodon stem and loop of transfer RNAs.</text>
</comment>
<comment type="catalytic activity">
    <reaction evidence="1">
        <text>uridine(38/39/40) in tRNA = pseudouridine(38/39/40) in tRNA</text>
        <dbReference type="Rhea" id="RHEA:22376"/>
        <dbReference type="Rhea" id="RHEA-COMP:10085"/>
        <dbReference type="Rhea" id="RHEA-COMP:10087"/>
        <dbReference type="ChEBI" id="CHEBI:65314"/>
        <dbReference type="ChEBI" id="CHEBI:65315"/>
        <dbReference type="EC" id="5.4.99.12"/>
    </reaction>
</comment>
<comment type="subunit">
    <text evidence="1">Homodimer.</text>
</comment>
<comment type="similarity">
    <text evidence="1">Belongs to the tRNA pseudouridine synthase TruA family.</text>
</comment>
<dbReference type="EC" id="5.4.99.12" evidence="1"/>
<dbReference type="EMBL" id="FM211187">
    <property type="protein sequence ID" value="CAR69389.1"/>
    <property type="molecule type" value="Genomic_DNA"/>
</dbReference>
<dbReference type="RefSeq" id="WP_000199207.1">
    <property type="nucleotide sequence ID" value="NC_011900.1"/>
</dbReference>
<dbReference type="SMR" id="B8ZM12"/>
<dbReference type="KEGG" id="sne:SPN23F16120"/>
<dbReference type="HOGENOM" id="CLU_014673_0_1_9"/>
<dbReference type="GO" id="GO:0003723">
    <property type="term" value="F:RNA binding"/>
    <property type="evidence" value="ECO:0007669"/>
    <property type="project" value="InterPro"/>
</dbReference>
<dbReference type="GO" id="GO:0160147">
    <property type="term" value="F:tRNA pseudouridine(38-40) synthase activity"/>
    <property type="evidence" value="ECO:0007669"/>
    <property type="project" value="UniProtKB-EC"/>
</dbReference>
<dbReference type="GO" id="GO:0031119">
    <property type="term" value="P:tRNA pseudouridine synthesis"/>
    <property type="evidence" value="ECO:0007669"/>
    <property type="project" value="UniProtKB-UniRule"/>
</dbReference>
<dbReference type="CDD" id="cd02570">
    <property type="entry name" value="PseudoU_synth_EcTruA"/>
    <property type="match status" value="1"/>
</dbReference>
<dbReference type="FunFam" id="3.30.70.580:FF:000001">
    <property type="entry name" value="tRNA pseudouridine synthase A"/>
    <property type="match status" value="1"/>
</dbReference>
<dbReference type="FunFam" id="3.30.70.660:FF:000009">
    <property type="entry name" value="tRNA pseudouridine synthase A"/>
    <property type="match status" value="1"/>
</dbReference>
<dbReference type="Gene3D" id="3.30.70.660">
    <property type="entry name" value="Pseudouridine synthase I, catalytic domain, C-terminal subdomain"/>
    <property type="match status" value="1"/>
</dbReference>
<dbReference type="Gene3D" id="3.30.70.580">
    <property type="entry name" value="Pseudouridine synthase I, catalytic domain, N-terminal subdomain"/>
    <property type="match status" value="1"/>
</dbReference>
<dbReference type="HAMAP" id="MF_00171">
    <property type="entry name" value="TruA"/>
    <property type="match status" value="1"/>
</dbReference>
<dbReference type="InterPro" id="IPR020103">
    <property type="entry name" value="PsdUridine_synth_cat_dom_sf"/>
</dbReference>
<dbReference type="InterPro" id="IPR001406">
    <property type="entry name" value="PsdUridine_synth_TruA"/>
</dbReference>
<dbReference type="InterPro" id="IPR020097">
    <property type="entry name" value="PsdUridine_synth_TruA_a/b_dom"/>
</dbReference>
<dbReference type="InterPro" id="IPR020095">
    <property type="entry name" value="PsdUridine_synth_TruA_C"/>
</dbReference>
<dbReference type="InterPro" id="IPR020094">
    <property type="entry name" value="TruA/RsuA/RluB/E/F_N"/>
</dbReference>
<dbReference type="NCBIfam" id="TIGR00071">
    <property type="entry name" value="hisT_truA"/>
    <property type="match status" value="1"/>
</dbReference>
<dbReference type="PANTHER" id="PTHR11142">
    <property type="entry name" value="PSEUDOURIDYLATE SYNTHASE"/>
    <property type="match status" value="1"/>
</dbReference>
<dbReference type="PANTHER" id="PTHR11142:SF0">
    <property type="entry name" value="TRNA PSEUDOURIDINE SYNTHASE-LIKE 1"/>
    <property type="match status" value="1"/>
</dbReference>
<dbReference type="Pfam" id="PF01416">
    <property type="entry name" value="PseudoU_synth_1"/>
    <property type="match status" value="2"/>
</dbReference>
<dbReference type="PIRSF" id="PIRSF001430">
    <property type="entry name" value="tRNA_psdUrid_synth"/>
    <property type="match status" value="1"/>
</dbReference>
<dbReference type="SUPFAM" id="SSF55120">
    <property type="entry name" value="Pseudouridine synthase"/>
    <property type="match status" value="1"/>
</dbReference>
<protein>
    <recommendedName>
        <fullName evidence="1">tRNA pseudouridine synthase A</fullName>
        <ecNumber evidence="1">5.4.99.12</ecNumber>
    </recommendedName>
    <alternativeName>
        <fullName evidence="1">tRNA pseudouridine(38-40) synthase</fullName>
    </alternativeName>
    <alternativeName>
        <fullName evidence="1">tRNA pseudouridylate synthase I</fullName>
    </alternativeName>
    <alternativeName>
        <fullName evidence="1">tRNA-uridine isomerase I</fullName>
    </alternativeName>
</protein>
<proteinExistence type="inferred from homology"/>
<sequence>MTRYKATISYDGYAFAGFQRQSHARSVQEEIEKTLTRLNKGQTITVHGAGRTDSGVHALGQVIHFDLPYQMDEEKLRFALDTQSPEDIDVISIELVADDFHCRYAKHSKTYEFIVDRGRPKNPMRRHYATHFPYPLDVERMQIAIKKLEGTHDFTGFTASGTSVEDKVRTITEASLIVDETGQFLTFTFSGNGFLYKQIRNMVGTLLKIGNNRMPVEQIDLILEKKDRQLAGPTAAPNGLYLKEIRYEE</sequence>
<reference key="1">
    <citation type="journal article" date="2009" name="J. Bacteriol.">
        <title>Role of conjugative elements in the evolution of the multidrug-resistant pandemic clone Streptococcus pneumoniae Spain23F ST81.</title>
        <authorList>
            <person name="Croucher N.J."/>
            <person name="Walker D."/>
            <person name="Romero P."/>
            <person name="Lennard N."/>
            <person name="Paterson G.K."/>
            <person name="Bason N.C."/>
            <person name="Mitchell A.M."/>
            <person name="Quail M.A."/>
            <person name="Andrew P.W."/>
            <person name="Parkhill J."/>
            <person name="Bentley S.D."/>
            <person name="Mitchell T.J."/>
        </authorList>
    </citation>
    <scope>NUCLEOTIDE SEQUENCE [LARGE SCALE GENOMIC DNA]</scope>
    <source>
        <strain>ATCC 700669 / Spain 23F-1</strain>
    </source>
</reference>
<name>TRUA_STRPJ</name>